<feature type="chain" id="PRO_1000198336" description="UPF0304 protein YfbU">
    <location>
        <begin position="1"/>
        <end position="164"/>
    </location>
</feature>
<proteinExistence type="inferred from homology"/>
<organism>
    <name type="scientific">Escherichia coli O157:H7 (strain EC4115 / EHEC)</name>
    <dbReference type="NCBI Taxonomy" id="444450"/>
    <lineage>
        <taxon>Bacteria</taxon>
        <taxon>Pseudomonadati</taxon>
        <taxon>Pseudomonadota</taxon>
        <taxon>Gammaproteobacteria</taxon>
        <taxon>Enterobacterales</taxon>
        <taxon>Enterobacteriaceae</taxon>
        <taxon>Escherichia</taxon>
    </lineage>
</organism>
<reference key="1">
    <citation type="journal article" date="2011" name="Proc. Natl. Acad. Sci. U.S.A.">
        <title>Genomic anatomy of Escherichia coli O157:H7 outbreaks.</title>
        <authorList>
            <person name="Eppinger M."/>
            <person name="Mammel M.K."/>
            <person name="Leclerc J.E."/>
            <person name="Ravel J."/>
            <person name="Cebula T.A."/>
        </authorList>
    </citation>
    <scope>NUCLEOTIDE SEQUENCE [LARGE SCALE GENOMIC DNA]</scope>
    <source>
        <strain>EC4115 / EHEC</strain>
    </source>
</reference>
<evidence type="ECO:0000255" key="1">
    <source>
        <dbReference type="HAMAP-Rule" id="MF_00762"/>
    </source>
</evidence>
<gene>
    <name evidence="1" type="primary">yfbU</name>
    <name type="ordered locus">ECH74115_3433</name>
</gene>
<accession>B5YXT4</accession>
<sequence length="164" mass="19536">MEMTNAQRLILSNQYKMMTMLDPANAERYRRLQTIIERGYGLQMRELDREFGELKEETCRTIIDIMEMYHALHVSWSNLQDQQSIDERRVTFLGFDAATEARYLGYVRFMVNVEGRYTHFDAGTHGFNAQTPMWEKYQRMLNVWHACPRQYHLSANEINQIINA</sequence>
<name>YFBU_ECO5E</name>
<protein>
    <recommendedName>
        <fullName evidence="1">UPF0304 protein YfbU</fullName>
    </recommendedName>
</protein>
<dbReference type="EMBL" id="CP001164">
    <property type="protein sequence ID" value="ACI38603.1"/>
    <property type="molecule type" value="Genomic_DNA"/>
</dbReference>
<dbReference type="RefSeq" id="WP_000426124.1">
    <property type="nucleotide sequence ID" value="NC_011353.1"/>
</dbReference>
<dbReference type="SMR" id="B5YXT4"/>
<dbReference type="KEGG" id="ecf:ECH74115_3433"/>
<dbReference type="HOGENOM" id="CLU_101021_1_0_6"/>
<dbReference type="FunFam" id="1.10.3190.10:FF:000001">
    <property type="entry name" value="UPF0304 protein YfbU"/>
    <property type="match status" value="1"/>
</dbReference>
<dbReference type="Gene3D" id="1.10.287.680">
    <property type="entry name" value="Helix hairpin bin"/>
    <property type="match status" value="1"/>
</dbReference>
<dbReference type="Gene3D" id="1.10.3190.10">
    <property type="entry name" value="yfbu gene product, domain 2"/>
    <property type="match status" value="1"/>
</dbReference>
<dbReference type="HAMAP" id="MF_00762">
    <property type="entry name" value="UPF0304"/>
    <property type="match status" value="1"/>
</dbReference>
<dbReference type="InterPro" id="IPR005587">
    <property type="entry name" value="UPF0304_YfbU"/>
</dbReference>
<dbReference type="InterPro" id="IPR023146">
    <property type="entry name" value="YfbU_alpha-helical_sf"/>
</dbReference>
<dbReference type="InterPro" id="IPR023145">
    <property type="entry name" value="YfbU_helix-hairpin_sf"/>
</dbReference>
<dbReference type="NCBIfam" id="NF003936">
    <property type="entry name" value="PRK05445.1"/>
    <property type="match status" value="1"/>
</dbReference>
<dbReference type="Pfam" id="PF03887">
    <property type="entry name" value="YfbU"/>
    <property type="match status" value="1"/>
</dbReference>
<dbReference type="PIRSF" id="PIRSF006272">
    <property type="entry name" value="UCP006272"/>
    <property type="match status" value="1"/>
</dbReference>
<dbReference type="SUPFAM" id="SSF116960">
    <property type="entry name" value="YfbU-like"/>
    <property type="match status" value="1"/>
</dbReference>
<comment type="similarity">
    <text evidence="1">Belongs to the UPF0304 family.</text>
</comment>